<dbReference type="EMBL" id="CP000076">
    <property type="protein sequence ID" value="AAY91392.1"/>
    <property type="molecule type" value="Genomic_DNA"/>
</dbReference>
<dbReference type="RefSeq" id="WP_002553164.1">
    <property type="nucleotide sequence ID" value="NC_004129.6"/>
</dbReference>
<dbReference type="SMR" id="Q4KEV8"/>
<dbReference type="STRING" id="220664.PFL_2117"/>
<dbReference type="GeneID" id="98284088"/>
<dbReference type="KEGG" id="pfl:PFL_2117"/>
<dbReference type="eggNOG" id="COG0776">
    <property type="taxonomic scope" value="Bacteria"/>
</dbReference>
<dbReference type="HOGENOM" id="CLU_105066_1_3_6"/>
<dbReference type="Proteomes" id="UP000008540">
    <property type="component" value="Chromosome"/>
</dbReference>
<dbReference type="GO" id="GO:0005829">
    <property type="term" value="C:cytosol"/>
    <property type="evidence" value="ECO:0007669"/>
    <property type="project" value="TreeGrafter"/>
</dbReference>
<dbReference type="GO" id="GO:0003677">
    <property type="term" value="F:DNA binding"/>
    <property type="evidence" value="ECO:0007669"/>
    <property type="project" value="UniProtKB-UniRule"/>
</dbReference>
<dbReference type="GO" id="GO:0030527">
    <property type="term" value="F:structural constituent of chromatin"/>
    <property type="evidence" value="ECO:0007669"/>
    <property type="project" value="InterPro"/>
</dbReference>
<dbReference type="GO" id="GO:0006310">
    <property type="term" value="P:DNA recombination"/>
    <property type="evidence" value="ECO:0007669"/>
    <property type="project" value="UniProtKB-UniRule"/>
</dbReference>
<dbReference type="GO" id="GO:0009893">
    <property type="term" value="P:positive regulation of metabolic process"/>
    <property type="evidence" value="ECO:0007669"/>
    <property type="project" value="UniProtKB-ARBA"/>
</dbReference>
<dbReference type="GO" id="GO:0006355">
    <property type="term" value="P:regulation of DNA-templated transcription"/>
    <property type="evidence" value="ECO:0007669"/>
    <property type="project" value="UniProtKB-UniRule"/>
</dbReference>
<dbReference type="GO" id="GO:0006417">
    <property type="term" value="P:regulation of translation"/>
    <property type="evidence" value="ECO:0007669"/>
    <property type="project" value="UniProtKB-UniRule"/>
</dbReference>
<dbReference type="CDD" id="cd13835">
    <property type="entry name" value="IHF_A"/>
    <property type="match status" value="1"/>
</dbReference>
<dbReference type="FunFam" id="4.10.520.10:FF:000002">
    <property type="entry name" value="Integration host factor subunit alpha"/>
    <property type="match status" value="1"/>
</dbReference>
<dbReference type="Gene3D" id="4.10.520.10">
    <property type="entry name" value="IHF-like DNA-binding proteins"/>
    <property type="match status" value="1"/>
</dbReference>
<dbReference type="HAMAP" id="MF_00380">
    <property type="entry name" value="IHF_alpha"/>
    <property type="match status" value="1"/>
</dbReference>
<dbReference type="InterPro" id="IPR000119">
    <property type="entry name" value="Hist_DNA-bd"/>
</dbReference>
<dbReference type="InterPro" id="IPR020816">
    <property type="entry name" value="Histone-like_DNA-bd_CS"/>
</dbReference>
<dbReference type="InterPro" id="IPR010992">
    <property type="entry name" value="IHF-like_DNA-bd_dom_sf"/>
</dbReference>
<dbReference type="InterPro" id="IPR005684">
    <property type="entry name" value="IHF_alpha"/>
</dbReference>
<dbReference type="NCBIfam" id="TIGR00987">
    <property type="entry name" value="himA"/>
    <property type="match status" value="1"/>
</dbReference>
<dbReference type="NCBIfam" id="NF001401">
    <property type="entry name" value="PRK00285.1"/>
    <property type="match status" value="1"/>
</dbReference>
<dbReference type="PANTHER" id="PTHR33175">
    <property type="entry name" value="DNA-BINDING PROTEIN HU"/>
    <property type="match status" value="1"/>
</dbReference>
<dbReference type="PANTHER" id="PTHR33175:SF2">
    <property type="entry name" value="INTEGRATION HOST FACTOR SUBUNIT ALPHA"/>
    <property type="match status" value="1"/>
</dbReference>
<dbReference type="Pfam" id="PF00216">
    <property type="entry name" value="Bac_DNA_binding"/>
    <property type="match status" value="1"/>
</dbReference>
<dbReference type="PRINTS" id="PR01727">
    <property type="entry name" value="DNABINDINGHU"/>
</dbReference>
<dbReference type="SMART" id="SM00411">
    <property type="entry name" value="BHL"/>
    <property type="match status" value="1"/>
</dbReference>
<dbReference type="SUPFAM" id="SSF47729">
    <property type="entry name" value="IHF-like DNA-binding proteins"/>
    <property type="match status" value="1"/>
</dbReference>
<dbReference type="PROSITE" id="PS00045">
    <property type="entry name" value="HISTONE_LIKE"/>
    <property type="match status" value="1"/>
</dbReference>
<accession>Q4KEV8</accession>
<gene>
    <name evidence="1" type="primary">ihfA</name>
    <name evidence="1" type="synonym">himA</name>
    <name type="ordered locus">PFL_2117</name>
</gene>
<evidence type="ECO:0000255" key="1">
    <source>
        <dbReference type="HAMAP-Rule" id="MF_00380"/>
    </source>
</evidence>
<evidence type="ECO:0000256" key="2">
    <source>
        <dbReference type="SAM" id="MobiDB-lite"/>
    </source>
</evidence>
<proteinExistence type="inferred from homology"/>
<feature type="chain" id="PRO_0000277758" description="Integration host factor subunit alpha">
    <location>
        <begin position="1"/>
        <end position="100"/>
    </location>
</feature>
<feature type="region of interest" description="Disordered" evidence="2">
    <location>
        <begin position="54"/>
        <end position="73"/>
    </location>
</feature>
<sequence length="100" mass="11476">MGALTKAEMAERLYEELGLNKREAKELVELFFEEIRHALEDNEQVKLSGFGNFDLRDKRQRPGRNPKTGEEIPITARRVVTFRPGQKLKARVEAYAGTKS</sequence>
<organism>
    <name type="scientific">Pseudomonas fluorescens (strain ATCC BAA-477 / NRRL B-23932 / Pf-5)</name>
    <dbReference type="NCBI Taxonomy" id="220664"/>
    <lineage>
        <taxon>Bacteria</taxon>
        <taxon>Pseudomonadati</taxon>
        <taxon>Pseudomonadota</taxon>
        <taxon>Gammaproteobacteria</taxon>
        <taxon>Pseudomonadales</taxon>
        <taxon>Pseudomonadaceae</taxon>
        <taxon>Pseudomonas</taxon>
    </lineage>
</organism>
<comment type="function">
    <text evidence="1">This protein is one of the two subunits of integration host factor, a specific DNA-binding protein that functions in genetic recombination as well as in transcriptional and translational control.</text>
</comment>
<comment type="subunit">
    <text evidence="1">Heterodimer of an alpha and a beta chain.</text>
</comment>
<comment type="similarity">
    <text evidence="1">Belongs to the bacterial histone-like protein family.</text>
</comment>
<name>IHFA_PSEF5</name>
<reference key="1">
    <citation type="journal article" date="2005" name="Nat. Biotechnol.">
        <title>Complete genome sequence of the plant commensal Pseudomonas fluorescens Pf-5.</title>
        <authorList>
            <person name="Paulsen I.T."/>
            <person name="Press C.M."/>
            <person name="Ravel J."/>
            <person name="Kobayashi D.Y."/>
            <person name="Myers G.S.A."/>
            <person name="Mavrodi D.V."/>
            <person name="DeBoy R.T."/>
            <person name="Seshadri R."/>
            <person name="Ren Q."/>
            <person name="Madupu R."/>
            <person name="Dodson R.J."/>
            <person name="Durkin A.S."/>
            <person name="Brinkac L.M."/>
            <person name="Daugherty S.C."/>
            <person name="Sullivan S.A."/>
            <person name="Rosovitz M.J."/>
            <person name="Gwinn M.L."/>
            <person name="Zhou L."/>
            <person name="Schneider D.J."/>
            <person name="Cartinhour S.W."/>
            <person name="Nelson W.C."/>
            <person name="Weidman J."/>
            <person name="Watkins K."/>
            <person name="Tran K."/>
            <person name="Khouri H."/>
            <person name="Pierson E.A."/>
            <person name="Pierson L.S. III"/>
            <person name="Thomashow L.S."/>
            <person name="Loper J.E."/>
        </authorList>
    </citation>
    <scope>NUCLEOTIDE SEQUENCE [LARGE SCALE GENOMIC DNA]</scope>
    <source>
        <strain>ATCC BAA-477 / NRRL B-23932 / Pf-5</strain>
    </source>
</reference>
<protein>
    <recommendedName>
        <fullName evidence="1">Integration host factor subunit alpha</fullName>
        <shortName evidence="1">IHF-alpha</shortName>
    </recommendedName>
</protein>
<keyword id="KW-0233">DNA recombination</keyword>
<keyword id="KW-0238">DNA-binding</keyword>
<keyword id="KW-0804">Transcription</keyword>
<keyword id="KW-0805">Transcription regulation</keyword>
<keyword id="KW-0810">Translation regulation</keyword>